<accession>Q2EEW1</accession>
<proteinExistence type="inferred from homology"/>
<name>RK16_HELSJ</name>
<protein>
    <recommendedName>
        <fullName evidence="2">Large ribosomal subunit protein uL16c</fullName>
    </recommendedName>
    <alternativeName>
        <fullName>50S ribosomal protein L16, plastid</fullName>
    </alternativeName>
</protein>
<evidence type="ECO:0000250" key="1"/>
<evidence type="ECO:0000305" key="2"/>
<keyword id="KW-0934">Plastid</keyword>
<keyword id="KW-0687">Ribonucleoprotein</keyword>
<keyword id="KW-0689">Ribosomal protein</keyword>
<geneLocation type="non-photosynthetic plastid"/>
<comment type="subunit">
    <text evidence="1">Part of the 50S ribosomal subunit.</text>
</comment>
<comment type="subcellular location">
    <subcellularLocation>
        <location>Plastid</location>
    </subcellularLocation>
</comment>
<comment type="similarity">
    <text evidence="2">Belongs to the universal ribosomal protein uL16 family.</text>
</comment>
<gene>
    <name type="primary">rpl16</name>
</gene>
<feature type="chain" id="PRO_0000251693" description="Large ribosomal subunit protein uL16c">
    <location>
        <begin position="1"/>
        <end position="137"/>
    </location>
</feature>
<dbReference type="EMBL" id="DQ398104">
    <property type="protein sequence ID" value="ABD33981.1"/>
    <property type="molecule type" value="Genomic_DNA"/>
</dbReference>
<dbReference type="RefSeq" id="YP_635933.2">
    <property type="nucleotide sequence ID" value="NC_008100.1"/>
</dbReference>
<dbReference type="SMR" id="Q2EEW1"/>
<dbReference type="GeneID" id="4100427"/>
<dbReference type="GO" id="GO:0005762">
    <property type="term" value="C:mitochondrial large ribosomal subunit"/>
    <property type="evidence" value="ECO:0007669"/>
    <property type="project" value="TreeGrafter"/>
</dbReference>
<dbReference type="GO" id="GO:0009536">
    <property type="term" value="C:plastid"/>
    <property type="evidence" value="ECO:0007669"/>
    <property type="project" value="UniProtKB-SubCell"/>
</dbReference>
<dbReference type="GO" id="GO:0019843">
    <property type="term" value="F:rRNA binding"/>
    <property type="evidence" value="ECO:0007669"/>
    <property type="project" value="InterPro"/>
</dbReference>
<dbReference type="GO" id="GO:0003735">
    <property type="term" value="F:structural constituent of ribosome"/>
    <property type="evidence" value="ECO:0007669"/>
    <property type="project" value="InterPro"/>
</dbReference>
<dbReference type="GO" id="GO:0032543">
    <property type="term" value="P:mitochondrial translation"/>
    <property type="evidence" value="ECO:0007669"/>
    <property type="project" value="TreeGrafter"/>
</dbReference>
<dbReference type="CDD" id="cd01433">
    <property type="entry name" value="Ribosomal_L16_L10e"/>
    <property type="match status" value="1"/>
</dbReference>
<dbReference type="FunFam" id="3.90.1170.10:FF:000001">
    <property type="entry name" value="50S ribosomal protein L16"/>
    <property type="match status" value="1"/>
</dbReference>
<dbReference type="Gene3D" id="3.90.1170.10">
    <property type="entry name" value="Ribosomal protein L10e/L16"/>
    <property type="match status" value="1"/>
</dbReference>
<dbReference type="HAMAP" id="MF_01342">
    <property type="entry name" value="Ribosomal_uL16"/>
    <property type="match status" value="1"/>
</dbReference>
<dbReference type="InterPro" id="IPR047873">
    <property type="entry name" value="Ribosomal_uL16"/>
</dbReference>
<dbReference type="InterPro" id="IPR000114">
    <property type="entry name" value="Ribosomal_uL16_bact-type"/>
</dbReference>
<dbReference type="InterPro" id="IPR020798">
    <property type="entry name" value="Ribosomal_uL16_CS"/>
</dbReference>
<dbReference type="InterPro" id="IPR016180">
    <property type="entry name" value="Ribosomal_uL16_dom"/>
</dbReference>
<dbReference type="InterPro" id="IPR036920">
    <property type="entry name" value="Ribosomal_uL16_sf"/>
</dbReference>
<dbReference type="NCBIfam" id="TIGR01164">
    <property type="entry name" value="rplP_bact"/>
    <property type="match status" value="1"/>
</dbReference>
<dbReference type="PANTHER" id="PTHR12220">
    <property type="entry name" value="50S/60S RIBOSOMAL PROTEIN L16"/>
    <property type="match status" value="1"/>
</dbReference>
<dbReference type="PANTHER" id="PTHR12220:SF13">
    <property type="entry name" value="LARGE RIBOSOMAL SUBUNIT PROTEIN UL16M"/>
    <property type="match status" value="1"/>
</dbReference>
<dbReference type="Pfam" id="PF00252">
    <property type="entry name" value="Ribosomal_L16"/>
    <property type="match status" value="1"/>
</dbReference>
<dbReference type="PRINTS" id="PR00060">
    <property type="entry name" value="RIBOSOMALL16"/>
</dbReference>
<dbReference type="SUPFAM" id="SSF54686">
    <property type="entry name" value="Ribosomal protein L16p/L10e"/>
    <property type="match status" value="1"/>
</dbReference>
<dbReference type="PROSITE" id="PS00701">
    <property type="entry name" value="RIBOSOMAL_L16_2"/>
    <property type="match status" value="1"/>
</dbReference>
<reference key="1">
    <citation type="journal article" date="2006" name="BMC Biol.">
        <title>The complete plastid genome sequence of the parasitic green alga, Helicosporidium sp. is highly reduced and structured.</title>
        <authorList>
            <person name="de Koning A.P."/>
            <person name="Keeling P.J."/>
        </authorList>
    </citation>
    <scope>NUCLEOTIDE SEQUENCE [LARGE SCALE GENOMIC DNA]</scope>
</reference>
<organism>
    <name type="scientific">Helicosporidium sp. subsp. Simulium jonesii</name>
    <name type="common">Green alga</name>
    <dbReference type="NCBI Taxonomy" id="145475"/>
    <lineage>
        <taxon>Eukaryota</taxon>
        <taxon>Viridiplantae</taxon>
        <taxon>Chlorophyta</taxon>
        <taxon>core chlorophytes</taxon>
        <taxon>Trebouxiophyceae</taxon>
        <taxon>Chlorellales</taxon>
        <taxon>Chlorellaceae</taxon>
        <taxon>Helicosporidium</taxon>
    </lineage>
</organism>
<sequence length="137" mass="15690">MIYIPKKIRYRKHHRGRLKGVASKGNNLFFASCGLQALESSWITSQQMEAARRACTRKVKRHGKLFMRFFPDKPVTYRSAETRMGSGKGTPRDWVAVIKPGKILYELKGIPEPLARKALKLASAKLPLKTKFIFKKE</sequence>